<evidence type="ECO:0000255" key="1">
    <source>
        <dbReference type="HAMAP-Rule" id="MF_01393"/>
    </source>
</evidence>
<evidence type="ECO:0000305" key="2"/>
<gene>
    <name evidence="1" type="primary">atpB2</name>
    <name type="ordered locus">BBta_1436</name>
</gene>
<proteinExistence type="inferred from homology"/>
<comment type="function">
    <text evidence="1">Key component of the proton channel; it plays a direct role in the translocation of protons across the membrane.</text>
</comment>
<comment type="subunit">
    <text evidence="1">F-type ATPases have 2 components, CF(1) - the catalytic core - and CF(0) - the membrane proton channel. CF(1) has five subunits: alpha(3), beta(3), gamma(1), delta(1), epsilon(1). CF(0) has four main subunits: a, b, b' and c.</text>
</comment>
<comment type="subcellular location">
    <subcellularLocation>
        <location evidence="1">Cell inner membrane</location>
        <topology evidence="1">Multi-pass membrane protein</topology>
    </subcellularLocation>
</comment>
<comment type="similarity">
    <text evidence="1">Belongs to the ATPase A chain family.</text>
</comment>
<comment type="sequence caution" evidence="2">
    <conflict type="erroneous initiation">
        <sequence resource="EMBL-CDS" id="ABQ33662"/>
    </conflict>
</comment>
<organism>
    <name type="scientific">Bradyrhizobium sp. (strain BTAi1 / ATCC BAA-1182)</name>
    <dbReference type="NCBI Taxonomy" id="288000"/>
    <lineage>
        <taxon>Bacteria</taxon>
        <taxon>Pseudomonadati</taxon>
        <taxon>Pseudomonadota</taxon>
        <taxon>Alphaproteobacteria</taxon>
        <taxon>Hyphomicrobiales</taxon>
        <taxon>Nitrobacteraceae</taxon>
        <taxon>Bradyrhizobium</taxon>
    </lineage>
</organism>
<reference key="1">
    <citation type="journal article" date="2007" name="Science">
        <title>Legumes symbioses: absence of nod genes in photosynthetic bradyrhizobia.</title>
        <authorList>
            <person name="Giraud E."/>
            <person name="Moulin L."/>
            <person name="Vallenet D."/>
            <person name="Barbe V."/>
            <person name="Cytryn E."/>
            <person name="Avarre J.-C."/>
            <person name="Jaubert M."/>
            <person name="Simon D."/>
            <person name="Cartieaux F."/>
            <person name="Prin Y."/>
            <person name="Bena G."/>
            <person name="Hannibal L."/>
            <person name="Fardoux J."/>
            <person name="Kojadinovic M."/>
            <person name="Vuillet L."/>
            <person name="Lajus A."/>
            <person name="Cruveiller S."/>
            <person name="Rouy Z."/>
            <person name="Mangenot S."/>
            <person name="Segurens B."/>
            <person name="Dossat C."/>
            <person name="Franck W.L."/>
            <person name="Chang W.-S."/>
            <person name="Saunders E."/>
            <person name="Bruce D."/>
            <person name="Richardson P."/>
            <person name="Normand P."/>
            <person name="Dreyfus B."/>
            <person name="Pignol D."/>
            <person name="Stacey G."/>
            <person name="Emerich D."/>
            <person name="Vermeglio A."/>
            <person name="Medigue C."/>
            <person name="Sadowsky M."/>
        </authorList>
    </citation>
    <scope>NUCLEOTIDE SEQUENCE [LARGE SCALE GENOMIC DNA]</scope>
    <source>
        <strain>BTAi1 / ATCC BAA-1182</strain>
    </source>
</reference>
<name>ATP62_BRASB</name>
<keyword id="KW-0066">ATP synthesis</keyword>
<keyword id="KW-0997">Cell inner membrane</keyword>
<keyword id="KW-1003">Cell membrane</keyword>
<keyword id="KW-0138">CF(0)</keyword>
<keyword id="KW-0375">Hydrogen ion transport</keyword>
<keyword id="KW-0406">Ion transport</keyword>
<keyword id="KW-0472">Membrane</keyword>
<keyword id="KW-1185">Reference proteome</keyword>
<keyword id="KW-0812">Transmembrane</keyword>
<keyword id="KW-1133">Transmembrane helix</keyword>
<keyword id="KW-0813">Transport</keyword>
<accession>A5EBW8</accession>
<sequence length="223" mass="23854">MQSSPLTSTLLFHIGPVAITRPVVTTWVIMAALALVCRFVTRRLAILPDGRQALLEGIVTSVAGQIEDVIRKDARPFLPLLGTLIIFLVVANLSGVLPGVEAPTSKIETPAALALIVFFSVHYFGVRERGLRGYLASFAEPKLIMLPLNILSEITRTFSLMVRLFGNIMSGEFIIGLVVALAGLFVPIPLMALEILVGLVQAYIFTVLATVFIGAAVGSVAKG</sequence>
<protein>
    <recommendedName>
        <fullName evidence="1">ATP synthase subunit a 2</fullName>
    </recommendedName>
    <alternativeName>
        <fullName evidence="1">ATP synthase F0 sector subunit a 2</fullName>
    </alternativeName>
    <alternativeName>
        <fullName evidence="1">F-ATPase subunit 6 2</fullName>
    </alternativeName>
</protein>
<dbReference type="EMBL" id="CP000494">
    <property type="protein sequence ID" value="ABQ33662.1"/>
    <property type="status" value="ALT_INIT"/>
    <property type="molecule type" value="Genomic_DNA"/>
</dbReference>
<dbReference type="RefSeq" id="WP_041750403.1">
    <property type="nucleotide sequence ID" value="NC_009485.1"/>
</dbReference>
<dbReference type="SMR" id="A5EBW8"/>
<dbReference type="STRING" id="288000.BBta_1436"/>
<dbReference type="KEGG" id="bbt:BBta_1436"/>
<dbReference type="eggNOG" id="COG0356">
    <property type="taxonomic scope" value="Bacteria"/>
</dbReference>
<dbReference type="HOGENOM" id="CLU_041018_2_5_5"/>
<dbReference type="OrthoDB" id="9789241at2"/>
<dbReference type="Proteomes" id="UP000000246">
    <property type="component" value="Chromosome"/>
</dbReference>
<dbReference type="GO" id="GO:0005886">
    <property type="term" value="C:plasma membrane"/>
    <property type="evidence" value="ECO:0007669"/>
    <property type="project" value="UniProtKB-SubCell"/>
</dbReference>
<dbReference type="GO" id="GO:0045259">
    <property type="term" value="C:proton-transporting ATP synthase complex"/>
    <property type="evidence" value="ECO:0007669"/>
    <property type="project" value="UniProtKB-KW"/>
</dbReference>
<dbReference type="GO" id="GO:0046933">
    <property type="term" value="F:proton-transporting ATP synthase activity, rotational mechanism"/>
    <property type="evidence" value="ECO:0007669"/>
    <property type="project" value="UniProtKB-UniRule"/>
</dbReference>
<dbReference type="GO" id="GO:0042777">
    <property type="term" value="P:proton motive force-driven plasma membrane ATP synthesis"/>
    <property type="evidence" value="ECO:0007669"/>
    <property type="project" value="TreeGrafter"/>
</dbReference>
<dbReference type="CDD" id="cd00310">
    <property type="entry name" value="ATP-synt_Fo_a_6"/>
    <property type="match status" value="1"/>
</dbReference>
<dbReference type="Gene3D" id="1.20.120.220">
    <property type="entry name" value="ATP synthase, F0 complex, subunit A"/>
    <property type="match status" value="1"/>
</dbReference>
<dbReference type="HAMAP" id="MF_01393">
    <property type="entry name" value="ATP_synth_a_bact"/>
    <property type="match status" value="1"/>
</dbReference>
<dbReference type="InterPro" id="IPR045082">
    <property type="entry name" value="ATP_syn_F0_a_bact/chloroplast"/>
</dbReference>
<dbReference type="InterPro" id="IPR000568">
    <property type="entry name" value="ATP_synth_F0_asu"/>
</dbReference>
<dbReference type="InterPro" id="IPR035908">
    <property type="entry name" value="F0_ATP_A_sf"/>
</dbReference>
<dbReference type="NCBIfam" id="TIGR01131">
    <property type="entry name" value="ATP_synt_6_or_A"/>
    <property type="match status" value="1"/>
</dbReference>
<dbReference type="NCBIfam" id="NF009955">
    <property type="entry name" value="PRK13421.1"/>
    <property type="match status" value="1"/>
</dbReference>
<dbReference type="PANTHER" id="PTHR42823">
    <property type="entry name" value="ATP SYNTHASE SUBUNIT A, CHLOROPLASTIC"/>
    <property type="match status" value="1"/>
</dbReference>
<dbReference type="PANTHER" id="PTHR42823:SF3">
    <property type="entry name" value="ATP SYNTHASE SUBUNIT A, CHLOROPLASTIC"/>
    <property type="match status" value="1"/>
</dbReference>
<dbReference type="Pfam" id="PF00119">
    <property type="entry name" value="ATP-synt_A"/>
    <property type="match status" value="1"/>
</dbReference>
<dbReference type="PRINTS" id="PR00123">
    <property type="entry name" value="ATPASEA"/>
</dbReference>
<dbReference type="SUPFAM" id="SSF81336">
    <property type="entry name" value="F1F0 ATP synthase subunit A"/>
    <property type="match status" value="1"/>
</dbReference>
<feature type="chain" id="PRO_0000362250" description="ATP synthase subunit a 2">
    <location>
        <begin position="1"/>
        <end position="223"/>
    </location>
</feature>
<feature type="transmembrane region" description="Helical" evidence="1">
    <location>
        <begin position="17"/>
        <end position="37"/>
    </location>
</feature>
<feature type="transmembrane region" description="Helical" evidence="1">
    <location>
        <begin position="77"/>
        <end position="97"/>
    </location>
</feature>
<feature type="transmembrane region" description="Helical" evidence="1">
    <location>
        <begin position="106"/>
        <end position="126"/>
    </location>
</feature>
<feature type="transmembrane region" description="Helical" evidence="1">
    <location>
        <begin position="173"/>
        <end position="193"/>
    </location>
</feature>
<feature type="transmembrane region" description="Helical" evidence="1">
    <location>
        <begin position="195"/>
        <end position="215"/>
    </location>
</feature>